<protein>
    <recommendedName>
        <fullName evidence="1">Succinate--CoA ligase [ADP/GDP-forming] subunit alpha, mitochondrial</fullName>
        <ecNumber evidence="1">6.2.1.4</ecNumber>
        <ecNumber evidence="1">6.2.1.5</ecNumber>
    </recommendedName>
    <alternativeName>
        <fullName evidence="1">Succinyl-CoA synthetase subunit alpha</fullName>
        <shortName evidence="1">SCS-alpha</shortName>
    </alternativeName>
</protein>
<accession>Q9YGD2</accession>
<gene>
    <name evidence="1" type="primary">SUCLG1</name>
</gene>
<dbReference type="EC" id="6.2.1.4" evidence="1"/>
<dbReference type="EC" id="6.2.1.5" evidence="1"/>
<dbReference type="EMBL" id="AF035393">
    <property type="protein sequence ID" value="AAD02018.1"/>
    <property type="molecule type" value="mRNA"/>
</dbReference>
<dbReference type="EMBL" id="AF035394">
    <property type="protein sequence ID" value="AAD02019.1"/>
    <property type="molecule type" value="mRNA"/>
</dbReference>
<dbReference type="SMR" id="Q9YGD2"/>
<dbReference type="eggNOG" id="KOG1255">
    <property type="taxonomic scope" value="Eukaryota"/>
</dbReference>
<dbReference type="OrthoDB" id="1664372at2759"/>
<dbReference type="SABIO-RK" id="Q9YGD2"/>
<dbReference type="UniPathway" id="UPA00223">
    <property type="reaction ID" value="UER00999"/>
</dbReference>
<dbReference type="GO" id="GO:0005739">
    <property type="term" value="C:mitochondrion"/>
    <property type="evidence" value="ECO:0007669"/>
    <property type="project" value="UniProtKB-SubCell"/>
</dbReference>
<dbReference type="GO" id="GO:0009361">
    <property type="term" value="C:succinate-CoA ligase complex (ADP-forming)"/>
    <property type="evidence" value="ECO:0007669"/>
    <property type="project" value="TreeGrafter"/>
</dbReference>
<dbReference type="GO" id="GO:0000166">
    <property type="term" value="F:nucleotide binding"/>
    <property type="evidence" value="ECO:0007669"/>
    <property type="project" value="UniProtKB-KW"/>
</dbReference>
<dbReference type="GO" id="GO:0004775">
    <property type="term" value="F:succinate-CoA ligase (ADP-forming) activity"/>
    <property type="evidence" value="ECO:0007669"/>
    <property type="project" value="UniProtKB-EC"/>
</dbReference>
<dbReference type="GO" id="GO:0004776">
    <property type="term" value="F:succinate-CoA ligase (GDP-forming) activity"/>
    <property type="evidence" value="ECO:0007669"/>
    <property type="project" value="UniProtKB-EC"/>
</dbReference>
<dbReference type="GO" id="GO:0006099">
    <property type="term" value="P:tricarboxylic acid cycle"/>
    <property type="evidence" value="ECO:0007669"/>
    <property type="project" value="UniProtKB-UniPathway"/>
</dbReference>
<dbReference type="FunFam" id="3.40.50.720:FF:000002">
    <property type="entry name" value="Succinate--CoA ligase [ADP-forming] subunit alpha"/>
    <property type="match status" value="1"/>
</dbReference>
<dbReference type="FunFam" id="3.40.50.261:FF:000005">
    <property type="entry name" value="Succinate--CoA ligase [ADP-forming] subunit alpha, mitochondrial"/>
    <property type="match status" value="1"/>
</dbReference>
<dbReference type="Gene3D" id="3.40.50.720">
    <property type="entry name" value="NAD(P)-binding Rossmann-like Domain"/>
    <property type="match status" value="1"/>
</dbReference>
<dbReference type="Gene3D" id="3.40.50.261">
    <property type="entry name" value="Succinyl-CoA synthetase domains"/>
    <property type="match status" value="1"/>
</dbReference>
<dbReference type="HAMAP" id="MF_01988">
    <property type="entry name" value="Succ_CoA_alpha"/>
    <property type="match status" value="1"/>
</dbReference>
<dbReference type="InterPro" id="IPR017440">
    <property type="entry name" value="Cit_synth/succinyl-CoA_lig_AS"/>
</dbReference>
<dbReference type="InterPro" id="IPR033847">
    <property type="entry name" value="Citrt_syn/SCS-alpha_CS"/>
</dbReference>
<dbReference type="InterPro" id="IPR003781">
    <property type="entry name" value="CoA-bd"/>
</dbReference>
<dbReference type="InterPro" id="IPR005810">
    <property type="entry name" value="CoA_lig_alpha"/>
</dbReference>
<dbReference type="InterPro" id="IPR036291">
    <property type="entry name" value="NAD(P)-bd_dom_sf"/>
</dbReference>
<dbReference type="InterPro" id="IPR005811">
    <property type="entry name" value="SUCC_ACL_C"/>
</dbReference>
<dbReference type="InterPro" id="IPR016102">
    <property type="entry name" value="Succinyl-CoA_synth-like"/>
</dbReference>
<dbReference type="NCBIfam" id="NF004230">
    <property type="entry name" value="PRK05678.1"/>
    <property type="match status" value="1"/>
</dbReference>
<dbReference type="NCBIfam" id="TIGR01019">
    <property type="entry name" value="sucCoAalpha"/>
    <property type="match status" value="1"/>
</dbReference>
<dbReference type="PANTHER" id="PTHR11117:SF2">
    <property type="entry name" value="SUCCINATE--COA LIGASE [ADP_GDP-FORMING] SUBUNIT ALPHA, MITOCHONDRIAL"/>
    <property type="match status" value="1"/>
</dbReference>
<dbReference type="PANTHER" id="PTHR11117">
    <property type="entry name" value="SUCCINYL-COA LIGASE SUBUNIT ALPHA"/>
    <property type="match status" value="1"/>
</dbReference>
<dbReference type="Pfam" id="PF02629">
    <property type="entry name" value="CoA_binding"/>
    <property type="match status" value="1"/>
</dbReference>
<dbReference type="Pfam" id="PF00549">
    <property type="entry name" value="Ligase_CoA"/>
    <property type="match status" value="1"/>
</dbReference>
<dbReference type="PIRSF" id="PIRSF001553">
    <property type="entry name" value="SucCS_alpha"/>
    <property type="match status" value="1"/>
</dbReference>
<dbReference type="PRINTS" id="PR01798">
    <property type="entry name" value="SCOASYNTHASE"/>
</dbReference>
<dbReference type="SMART" id="SM00881">
    <property type="entry name" value="CoA_binding"/>
    <property type="match status" value="1"/>
</dbReference>
<dbReference type="SUPFAM" id="SSF51735">
    <property type="entry name" value="NAD(P)-binding Rossmann-fold domains"/>
    <property type="match status" value="1"/>
</dbReference>
<dbReference type="SUPFAM" id="SSF52210">
    <property type="entry name" value="Succinyl-CoA synthetase domains"/>
    <property type="match status" value="1"/>
</dbReference>
<dbReference type="PROSITE" id="PS01216">
    <property type="entry name" value="SUCCINYL_COA_LIG_1"/>
    <property type="match status" value="1"/>
</dbReference>
<dbReference type="PROSITE" id="PS00399">
    <property type="entry name" value="SUCCINYL_COA_LIG_2"/>
    <property type="match status" value="1"/>
</dbReference>
<sequence length="306" mass="32052">CSYSASRKNLYISKNTKVICQGFTGKQGTFHSQQALDYGTNLVGGISPGKGGKTHLGLPVFNSVKEAKEQTGASATVIYVPPPFAAAAINEAIDAEMPLVVCITEGIPQQDMVRVKHRLVRQDKTRLVGPNCPGVINPGECKIGIMPGHIHKKGRIGIVSRSGTLTYEAVHQTSQVGLGQSLCIGIGGDPFNGTNFIDCLDVFLKDPHTEGIILIGEIGGNAEEDAAAFLKENNSGPNAKPVVSFIAGLTAPPGRRMGHAGAIIAGGKGGAKEKIAALQNAGVVVSMSPAQLGSTIYKEFEKRKLL</sequence>
<evidence type="ECO:0000255" key="1">
    <source>
        <dbReference type="HAMAP-Rule" id="MF_03222"/>
    </source>
</evidence>
<evidence type="ECO:0000269" key="2">
    <source>
    </source>
</evidence>
<evidence type="ECO:0000305" key="3">
    <source>
    </source>
</evidence>
<organism>
    <name type="scientific">Columba livia</name>
    <name type="common">Rock dove</name>
    <dbReference type="NCBI Taxonomy" id="8932"/>
    <lineage>
        <taxon>Eukaryota</taxon>
        <taxon>Metazoa</taxon>
        <taxon>Chordata</taxon>
        <taxon>Craniata</taxon>
        <taxon>Vertebrata</taxon>
        <taxon>Euteleostomi</taxon>
        <taxon>Archelosauria</taxon>
        <taxon>Archosauria</taxon>
        <taxon>Dinosauria</taxon>
        <taxon>Saurischia</taxon>
        <taxon>Theropoda</taxon>
        <taxon>Coelurosauria</taxon>
        <taxon>Aves</taxon>
        <taxon>Neognathae</taxon>
        <taxon>Neoaves</taxon>
        <taxon>Columbimorphae</taxon>
        <taxon>Columbiformes</taxon>
        <taxon>Columbidae</taxon>
        <taxon>Columba</taxon>
    </lineage>
</organism>
<comment type="function">
    <text evidence="1 2">Succinyl-CoA synthetase functions in the citric acid cycle (TCA), coupling the hydrolysis of succinyl-CoA to the synthesis of either ATP or GTP and thus represents the only step of substrate-level phosphorylation in the TCA. The alpha subunit of the enzyme binds the substrates coenzyme A and phosphate, while succinate binding and specificity for either ATP or GTP is provided by different beta subunits.</text>
</comment>
<comment type="catalytic activity">
    <reaction evidence="1 2">
        <text>succinate + ATP + CoA = succinyl-CoA + ADP + phosphate</text>
        <dbReference type="Rhea" id="RHEA:17661"/>
        <dbReference type="ChEBI" id="CHEBI:30031"/>
        <dbReference type="ChEBI" id="CHEBI:30616"/>
        <dbReference type="ChEBI" id="CHEBI:43474"/>
        <dbReference type="ChEBI" id="CHEBI:57287"/>
        <dbReference type="ChEBI" id="CHEBI:57292"/>
        <dbReference type="ChEBI" id="CHEBI:456216"/>
        <dbReference type="EC" id="6.2.1.5"/>
    </reaction>
</comment>
<comment type="catalytic activity">
    <reaction evidence="1 2">
        <text>GTP + succinate + CoA = succinyl-CoA + GDP + phosphate</text>
        <dbReference type="Rhea" id="RHEA:22120"/>
        <dbReference type="ChEBI" id="CHEBI:30031"/>
        <dbReference type="ChEBI" id="CHEBI:37565"/>
        <dbReference type="ChEBI" id="CHEBI:43474"/>
        <dbReference type="ChEBI" id="CHEBI:57287"/>
        <dbReference type="ChEBI" id="CHEBI:57292"/>
        <dbReference type="ChEBI" id="CHEBI:58189"/>
        <dbReference type="EC" id="6.2.1.4"/>
    </reaction>
</comment>
<comment type="biophysicochemical properties">
    <kinetics>
        <KM evidence="2">5.1 mM for succinate (for A-SCS)</KM>
        <KM evidence="2">0.032 mM for CoA (for A-SCS)</KM>
        <KM evidence="2">0.041 mM for succinyl-CoA (for A-SCS)</KM>
        <KM evidence="2">0.72 mM for phosphate (for A-SCS)</KM>
        <KM evidence="2">4.9 mM for succinate (for G-SCS)</KM>
        <KM evidence="2">0.036 mM for CoA (for G-SCS)</KM>
        <KM evidence="2">0.086 mM for succinyl-CoA (for G-SCS)</KM>
        <KM evidence="2">2.26 mM for phosphate (for G-SCS)</KM>
    </kinetics>
</comment>
<comment type="pathway">
    <text evidence="1 3">Carbohydrate metabolism; tricarboxylic acid cycle; succinate from succinyl-CoA (ligase route): step 1/1.</text>
</comment>
<comment type="subunit">
    <text evidence="1 2">Heterodimer of an alpha and a beta subunit. Different beta subunits determine nucleotide specificity. Together with the ATP-specific beta subunit SUCLA2, forms an ADP-forming succinyl-CoA synthetase (A-SCS). Together with the GTP-specific beta subunit SUCLG2 forms a GDP-forming succinyl-CoA synthetase (G-SCS).</text>
</comment>
<comment type="subcellular location">
    <subcellularLocation>
        <location evidence="1 3">Mitochondrion</location>
    </subcellularLocation>
</comment>
<comment type="similarity">
    <text evidence="1">Belongs to the succinate/malate CoA ligase alpha subunit family.</text>
</comment>
<reference key="1">
    <citation type="journal article" date="1998" name="J. Biol. Chem.">
        <title>Genetic evidence for the expression of ATP- and GTP-specific succinyl-CoA synthetases in multicellular eucaryotes.</title>
        <authorList>
            <person name="Johnson J.D."/>
            <person name="Mehus J.G."/>
            <person name="Tews K."/>
            <person name="Milavetz B.I."/>
            <person name="Lambeth D.O."/>
        </authorList>
    </citation>
    <scope>NUCLEOTIDE SEQUENCE [MRNA]</scope>
    <source>
        <tissue>Liver</tissue>
        <tissue>Skeletal muscle</tissue>
    </source>
</reference>
<reference key="2">
    <citation type="journal article" date="1998" name="J. Biol. Chem.">
        <title>Characterization of the ATP- and GTP-specific succinyl-CoA synthetases in pigeon. The enzymes incorporate the same alpha-subunit.</title>
        <authorList>
            <person name="Johnson J.D."/>
            <person name="Muhonen W.W."/>
            <person name="Lambeth D.O."/>
        </authorList>
    </citation>
    <scope>FUNCTION</scope>
    <scope>CATALYTIC ACTIVITY</scope>
    <scope>SUBUNIT</scope>
    <scope>BIOPHYSICOCHEMICAL PROPERTIES</scope>
</reference>
<feature type="chain" id="PRO_0000413700" description="Succinate--CoA ligase [ADP/GDP-forming] subunit alpha, mitochondrial">
    <location>
        <begin position="1" status="less than"/>
        <end position="306"/>
    </location>
</feature>
<feature type="active site" description="Tele-phosphohistidine intermediate" evidence="1">
    <location>
        <position position="259"/>
    </location>
</feature>
<feature type="binding site" evidence="1">
    <location>
        <begin position="24"/>
        <end position="27"/>
    </location>
    <ligand>
        <name>CoA</name>
        <dbReference type="ChEBI" id="CHEBI:57287"/>
    </ligand>
</feature>
<feature type="binding site" evidence="1">
    <location>
        <position position="50"/>
    </location>
    <ligand>
        <name>CoA</name>
        <dbReference type="ChEBI" id="CHEBI:57287"/>
    </ligand>
</feature>
<feature type="binding site" evidence="1">
    <location>
        <begin position="103"/>
        <end position="105"/>
    </location>
    <ligand>
        <name>CoA</name>
        <dbReference type="ChEBI" id="CHEBI:57287"/>
    </ligand>
</feature>
<feature type="binding site" evidence="1">
    <location>
        <position position="167"/>
    </location>
    <ligand>
        <name>substrate</name>
        <note>ligand shared with subunit beta</note>
    </ligand>
</feature>
<feature type="non-terminal residue">
    <location>
        <position position="1"/>
    </location>
</feature>
<name>SUCA_COLLI</name>
<keyword id="KW-0436">Ligase</keyword>
<keyword id="KW-0496">Mitochondrion</keyword>
<keyword id="KW-0547">Nucleotide-binding</keyword>
<keyword id="KW-0816">Tricarboxylic acid cycle</keyword>
<proteinExistence type="evidence at protein level"/>